<dbReference type="EC" id="2.7.1.25" evidence="1"/>
<dbReference type="EMBL" id="BX294143">
    <property type="protein sequence ID" value="CAD74583.1"/>
    <property type="molecule type" value="Genomic_DNA"/>
</dbReference>
<dbReference type="RefSeq" id="NP_867039.1">
    <property type="nucleotide sequence ID" value="NC_005027.1"/>
</dbReference>
<dbReference type="RefSeq" id="WP_007332129.1">
    <property type="nucleotide sequence ID" value="NC_005027.1"/>
</dbReference>
<dbReference type="SMR" id="Q7UQW3"/>
<dbReference type="FunCoup" id="Q7UQW3">
    <property type="interactions" value="127"/>
</dbReference>
<dbReference type="STRING" id="243090.RB6049"/>
<dbReference type="EnsemblBacteria" id="CAD74583">
    <property type="protein sequence ID" value="CAD74583"/>
    <property type="gene ID" value="RB6049"/>
</dbReference>
<dbReference type="KEGG" id="rba:RB6049"/>
<dbReference type="PATRIC" id="fig|243090.15.peg.2917"/>
<dbReference type="eggNOG" id="COG0529">
    <property type="taxonomic scope" value="Bacteria"/>
</dbReference>
<dbReference type="HOGENOM" id="CLU_046932_1_1_0"/>
<dbReference type="InParanoid" id="Q7UQW3"/>
<dbReference type="OrthoDB" id="9804504at2"/>
<dbReference type="UniPathway" id="UPA00140">
    <property type="reaction ID" value="UER00205"/>
</dbReference>
<dbReference type="Proteomes" id="UP000001025">
    <property type="component" value="Chromosome"/>
</dbReference>
<dbReference type="GO" id="GO:0004020">
    <property type="term" value="F:adenylylsulfate kinase activity"/>
    <property type="evidence" value="ECO:0007669"/>
    <property type="project" value="UniProtKB-UniRule"/>
</dbReference>
<dbReference type="GO" id="GO:0005524">
    <property type="term" value="F:ATP binding"/>
    <property type="evidence" value="ECO:0007669"/>
    <property type="project" value="UniProtKB-UniRule"/>
</dbReference>
<dbReference type="GO" id="GO:0004781">
    <property type="term" value="F:sulfate adenylyltransferase (ATP) activity"/>
    <property type="evidence" value="ECO:0000318"/>
    <property type="project" value="GO_Central"/>
</dbReference>
<dbReference type="GO" id="GO:0070814">
    <property type="term" value="P:hydrogen sulfide biosynthetic process"/>
    <property type="evidence" value="ECO:0007669"/>
    <property type="project" value="UniProtKB-UniRule"/>
</dbReference>
<dbReference type="GO" id="GO:0019379">
    <property type="term" value="P:sulfate assimilation, phosphoadenylyl sulfate reduction by phosphoadenylyl-sulfate reductase (thioredoxin)"/>
    <property type="evidence" value="ECO:0000318"/>
    <property type="project" value="GO_Central"/>
</dbReference>
<dbReference type="CDD" id="cd02027">
    <property type="entry name" value="APSK"/>
    <property type="match status" value="1"/>
</dbReference>
<dbReference type="Gene3D" id="3.40.50.300">
    <property type="entry name" value="P-loop containing nucleotide triphosphate hydrolases"/>
    <property type="match status" value="1"/>
</dbReference>
<dbReference type="HAMAP" id="MF_00065">
    <property type="entry name" value="Adenylyl_sulf_kinase"/>
    <property type="match status" value="1"/>
</dbReference>
<dbReference type="InterPro" id="IPR002891">
    <property type="entry name" value="APS_kinase"/>
</dbReference>
<dbReference type="InterPro" id="IPR027417">
    <property type="entry name" value="P-loop_NTPase"/>
</dbReference>
<dbReference type="InterPro" id="IPR050512">
    <property type="entry name" value="Sulf_AdTrans/APS_kinase"/>
</dbReference>
<dbReference type="NCBIfam" id="TIGR00455">
    <property type="entry name" value="apsK"/>
    <property type="match status" value="1"/>
</dbReference>
<dbReference type="NCBIfam" id="NF003013">
    <property type="entry name" value="PRK03846.1"/>
    <property type="match status" value="1"/>
</dbReference>
<dbReference type="PANTHER" id="PTHR42700:SF3">
    <property type="entry name" value="BIFUNCTIONAL SAT_APS KINASE-RELATED"/>
    <property type="match status" value="1"/>
</dbReference>
<dbReference type="PANTHER" id="PTHR42700">
    <property type="entry name" value="SULFATE ADENYLYLTRANSFERASE"/>
    <property type="match status" value="1"/>
</dbReference>
<dbReference type="Pfam" id="PF01583">
    <property type="entry name" value="APS_kinase"/>
    <property type="match status" value="1"/>
</dbReference>
<dbReference type="SUPFAM" id="SSF52540">
    <property type="entry name" value="P-loop containing nucleoside triphosphate hydrolases"/>
    <property type="match status" value="1"/>
</dbReference>
<keyword id="KW-0067">ATP-binding</keyword>
<keyword id="KW-0418">Kinase</keyword>
<keyword id="KW-0547">Nucleotide-binding</keyword>
<keyword id="KW-0597">Phosphoprotein</keyword>
<keyword id="KW-1185">Reference proteome</keyword>
<keyword id="KW-0808">Transferase</keyword>
<name>CYSC_RHOBA</name>
<evidence type="ECO:0000255" key="1">
    <source>
        <dbReference type="HAMAP-Rule" id="MF_00065"/>
    </source>
</evidence>
<evidence type="ECO:0000256" key="2">
    <source>
        <dbReference type="SAM" id="MobiDB-lite"/>
    </source>
</evidence>
<feature type="chain" id="PRO_0000105915" description="Adenylyl-sulfate kinase">
    <location>
        <begin position="1"/>
        <end position="247"/>
    </location>
</feature>
<feature type="region of interest" description="Disordered" evidence="2">
    <location>
        <begin position="1"/>
        <end position="24"/>
    </location>
</feature>
<feature type="active site" description="Phosphoserine intermediate" evidence="1">
    <location>
        <position position="146"/>
    </location>
</feature>
<feature type="binding site" evidence="1">
    <location>
        <begin position="55"/>
        <end position="62"/>
    </location>
    <ligand>
        <name>ATP</name>
        <dbReference type="ChEBI" id="CHEBI:30616"/>
    </ligand>
</feature>
<protein>
    <recommendedName>
        <fullName evidence="1">Adenylyl-sulfate kinase</fullName>
        <ecNumber evidence="1">2.7.1.25</ecNumber>
    </recommendedName>
    <alternativeName>
        <fullName evidence="1">APS kinase</fullName>
    </alternativeName>
    <alternativeName>
        <fullName evidence="1">ATP adenosine-5'-phosphosulfate 3'-phosphotransferase</fullName>
    </alternativeName>
    <alternativeName>
        <fullName evidence="1">Adenosine-5'-phosphosulfate kinase</fullName>
    </alternativeName>
</protein>
<proteinExistence type="inferred from homology"/>
<reference key="1">
    <citation type="journal article" date="2003" name="Proc. Natl. Acad. Sci. U.S.A.">
        <title>Complete genome sequence of the marine planctomycete Pirellula sp. strain 1.</title>
        <authorList>
            <person name="Gloeckner F.O."/>
            <person name="Kube M."/>
            <person name="Bauer M."/>
            <person name="Teeling H."/>
            <person name="Lombardot T."/>
            <person name="Ludwig W."/>
            <person name="Gade D."/>
            <person name="Beck A."/>
            <person name="Borzym K."/>
            <person name="Heitmann K."/>
            <person name="Rabus R."/>
            <person name="Schlesner H."/>
            <person name="Amann R."/>
            <person name="Reinhardt R."/>
        </authorList>
    </citation>
    <scope>NUCLEOTIDE SEQUENCE [LARGE SCALE GENOMIC DNA]</scope>
    <source>
        <strain>DSM 10527 / NCIMB 13988 / SH1</strain>
    </source>
</reference>
<sequence>MSQSNSDDSASSSTQQAGDGQDDVQQNIVWHAHTVSREDRESKLGQRGVVVWFTGLSGCGKSTIANELDRLLIDRGATCTLLDGDNVRHGLCAPPSVLKEEHGEDFAGRFGLGFGPTDREENIRRIGAVTELFASAGVIVLAAFVSPYQRDRDRVRNTIESSGRAGDFLEVFVDTPLEICKQRDPKGLYQKAIAGEIKNFTGISDPYDAPPSPEIHLKWREGQTPHDQASEIIREMEKRGVLGPAKG</sequence>
<accession>Q7UQW3</accession>
<comment type="function">
    <text evidence="1">Catalyzes the synthesis of activated sulfate.</text>
</comment>
<comment type="catalytic activity">
    <reaction evidence="1">
        <text>adenosine 5'-phosphosulfate + ATP = 3'-phosphoadenylyl sulfate + ADP + H(+)</text>
        <dbReference type="Rhea" id="RHEA:24152"/>
        <dbReference type="ChEBI" id="CHEBI:15378"/>
        <dbReference type="ChEBI" id="CHEBI:30616"/>
        <dbReference type="ChEBI" id="CHEBI:58243"/>
        <dbReference type="ChEBI" id="CHEBI:58339"/>
        <dbReference type="ChEBI" id="CHEBI:456216"/>
        <dbReference type="EC" id="2.7.1.25"/>
    </reaction>
</comment>
<comment type="pathway">
    <text evidence="1">Sulfur metabolism; hydrogen sulfide biosynthesis; sulfite from sulfate: step 2/3.</text>
</comment>
<comment type="similarity">
    <text evidence="1">Belongs to the APS kinase family.</text>
</comment>
<organism>
    <name type="scientific">Rhodopirellula baltica (strain DSM 10527 / NCIMB 13988 / SH1)</name>
    <dbReference type="NCBI Taxonomy" id="243090"/>
    <lineage>
        <taxon>Bacteria</taxon>
        <taxon>Pseudomonadati</taxon>
        <taxon>Planctomycetota</taxon>
        <taxon>Planctomycetia</taxon>
        <taxon>Pirellulales</taxon>
        <taxon>Pirellulaceae</taxon>
        <taxon>Rhodopirellula</taxon>
    </lineage>
</organism>
<gene>
    <name evidence="1" type="primary">cysC</name>
    <name type="ordered locus">RB6049</name>
</gene>